<protein>
    <recommendedName>
        <fullName evidence="1">Small ribosomal subunit protein uS3</fullName>
    </recommendedName>
    <alternativeName>
        <fullName evidence="2">30S ribosomal protein S3</fullName>
    </alternativeName>
</protein>
<feature type="chain" id="PRO_0000293810" description="Small ribosomal subunit protein uS3">
    <location>
        <begin position="1"/>
        <end position="222"/>
    </location>
</feature>
<feature type="domain" description="KH type-2" evidence="1">
    <location>
        <begin position="38"/>
        <end position="106"/>
    </location>
</feature>
<proteinExistence type="inferred from homology"/>
<sequence length="222" mass="24806">MGQKINPNGFRLGVNRDWEAKWYADKNYADTLNEDLRIRKFISEKLADASVSTVEIERAANRINISIHTAKPGMVIGKGGKEVEALRKQLSALTKKNVHINIVEIKKPDLDAKLVGEGIARQLEARIAFRRATRQATQRSMRSGAKGIKVQTAGRLNGADMARREWHTEGSVPLHTLRADIDYAWVEAATTYGQIGVKVWINRGEILPQRKNKPSKKTKGGN</sequence>
<gene>
    <name evidence="1" type="primary">rpsC</name>
    <name type="ordered locus">LGAS_0297</name>
</gene>
<organism>
    <name type="scientific">Lactobacillus gasseri (strain ATCC 33323 / DSM 20243 / BCRC 14619 / CIP 102991 / JCM 1131 / KCTC 3163 / NCIMB 11718 / NCTC 13722 / AM63)</name>
    <dbReference type="NCBI Taxonomy" id="324831"/>
    <lineage>
        <taxon>Bacteria</taxon>
        <taxon>Bacillati</taxon>
        <taxon>Bacillota</taxon>
        <taxon>Bacilli</taxon>
        <taxon>Lactobacillales</taxon>
        <taxon>Lactobacillaceae</taxon>
        <taxon>Lactobacillus</taxon>
    </lineage>
</organism>
<keyword id="KW-0687">Ribonucleoprotein</keyword>
<keyword id="KW-0689">Ribosomal protein</keyword>
<keyword id="KW-0694">RNA-binding</keyword>
<keyword id="KW-0699">rRNA-binding</keyword>
<dbReference type="EMBL" id="CP000413">
    <property type="protein sequence ID" value="ABJ59703.1"/>
    <property type="molecule type" value="Genomic_DNA"/>
</dbReference>
<dbReference type="RefSeq" id="WP_003647830.1">
    <property type="nucleotide sequence ID" value="NZ_WBMG01000001.1"/>
</dbReference>
<dbReference type="SMR" id="Q046B9"/>
<dbReference type="GeneID" id="29639404"/>
<dbReference type="KEGG" id="lga:LGAS_0297"/>
<dbReference type="HOGENOM" id="CLU_058591_0_2_9"/>
<dbReference type="BioCyc" id="LGAS324831:G1G6Y-295-MONOMER"/>
<dbReference type="Proteomes" id="UP000000664">
    <property type="component" value="Chromosome"/>
</dbReference>
<dbReference type="GO" id="GO:0022627">
    <property type="term" value="C:cytosolic small ribosomal subunit"/>
    <property type="evidence" value="ECO:0007669"/>
    <property type="project" value="TreeGrafter"/>
</dbReference>
<dbReference type="GO" id="GO:0003729">
    <property type="term" value="F:mRNA binding"/>
    <property type="evidence" value="ECO:0007669"/>
    <property type="project" value="UniProtKB-UniRule"/>
</dbReference>
<dbReference type="GO" id="GO:0019843">
    <property type="term" value="F:rRNA binding"/>
    <property type="evidence" value="ECO:0007669"/>
    <property type="project" value="UniProtKB-UniRule"/>
</dbReference>
<dbReference type="GO" id="GO:0003735">
    <property type="term" value="F:structural constituent of ribosome"/>
    <property type="evidence" value="ECO:0007669"/>
    <property type="project" value="InterPro"/>
</dbReference>
<dbReference type="GO" id="GO:0006412">
    <property type="term" value="P:translation"/>
    <property type="evidence" value="ECO:0007669"/>
    <property type="project" value="UniProtKB-UniRule"/>
</dbReference>
<dbReference type="CDD" id="cd02412">
    <property type="entry name" value="KH-II_30S_S3"/>
    <property type="match status" value="1"/>
</dbReference>
<dbReference type="FunFam" id="3.30.300.20:FF:000001">
    <property type="entry name" value="30S ribosomal protein S3"/>
    <property type="match status" value="1"/>
</dbReference>
<dbReference type="Gene3D" id="3.30.300.20">
    <property type="match status" value="1"/>
</dbReference>
<dbReference type="Gene3D" id="3.30.1140.32">
    <property type="entry name" value="Ribosomal protein S3, C-terminal domain"/>
    <property type="match status" value="1"/>
</dbReference>
<dbReference type="HAMAP" id="MF_01309_B">
    <property type="entry name" value="Ribosomal_uS3_B"/>
    <property type="match status" value="1"/>
</dbReference>
<dbReference type="InterPro" id="IPR004087">
    <property type="entry name" value="KH_dom"/>
</dbReference>
<dbReference type="InterPro" id="IPR015946">
    <property type="entry name" value="KH_dom-like_a/b"/>
</dbReference>
<dbReference type="InterPro" id="IPR004044">
    <property type="entry name" value="KH_dom_type_2"/>
</dbReference>
<dbReference type="InterPro" id="IPR009019">
    <property type="entry name" value="KH_sf_prok-type"/>
</dbReference>
<dbReference type="InterPro" id="IPR036419">
    <property type="entry name" value="Ribosomal_S3_C_sf"/>
</dbReference>
<dbReference type="InterPro" id="IPR005704">
    <property type="entry name" value="Ribosomal_uS3_bac-typ"/>
</dbReference>
<dbReference type="InterPro" id="IPR001351">
    <property type="entry name" value="Ribosomal_uS3_C"/>
</dbReference>
<dbReference type="InterPro" id="IPR018280">
    <property type="entry name" value="Ribosomal_uS3_CS"/>
</dbReference>
<dbReference type="NCBIfam" id="TIGR01009">
    <property type="entry name" value="rpsC_bact"/>
    <property type="match status" value="1"/>
</dbReference>
<dbReference type="PANTHER" id="PTHR11760">
    <property type="entry name" value="30S/40S RIBOSOMAL PROTEIN S3"/>
    <property type="match status" value="1"/>
</dbReference>
<dbReference type="PANTHER" id="PTHR11760:SF19">
    <property type="entry name" value="SMALL RIBOSOMAL SUBUNIT PROTEIN US3C"/>
    <property type="match status" value="1"/>
</dbReference>
<dbReference type="Pfam" id="PF07650">
    <property type="entry name" value="KH_2"/>
    <property type="match status" value="1"/>
</dbReference>
<dbReference type="Pfam" id="PF00189">
    <property type="entry name" value="Ribosomal_S3_C"/>
    <property type="match status" value="1"/>
</dbReference>
<dbReference type="SMART" id="SM00322">
    <property type="entry name" value="KH"/>
    <property type="match status" value="1"/>
</dbReference>
<dbReference type="SUPFAM" id="SSF54814">
    <property type="entry name" value="Prokaryotic type KH domain (KH-domain type II)"/>
    <property type="match status" value="1"/>
</dbReference>
<dbReference type="SUPFAM" id="SSF54821">
    <property type="entry name" value="Ribosomal protein S3 C-terminal domain"/>
    <property type="match status" value="1"/>
</dbReference>
<dbReference type="PROSITE" id="PS50823">
    <property type="entry name" value="KH_TYPE_2"/>
    <property type="match status" value="1"/>
</dbReference>
<dbReference type="PROSITE" id="PS00548">
    <property type="entry name" value="RIBOSOMAL_S3"/>
    <property type="match status" value="1"/>
</dbReference>
<reference key="1">
    <citation type="journal article" date="2006" name="Proc. Natl. Acad. Sci. U.S.A.">
        <title>Comparative genomics of the lactic acid bacteria.</title>
        <authorList>
            <person name="Makarova K.S."/>
            <person name="Slesarev A."/>
            <person name="Wolf Y.I."/>
            <person name="Sorokin A."/>
            <person name="Mirkin B."/>
            <person name="Koonin E.V."/>
            <person name="Pavlov A."/>
            <person name="Pavlova N."/>
            <person name="Karamychev V."/>
            <person name="Polouchine N."/>
            <person name="Shakhova V."/>
            <person name="Grigoriev I."/>
            <person name="Lou Y."/>
            <person name="Rohksar D."/>
            <person name="Lucas S."/>
            <person name="Huang K."/>
            <person name="Goodstein D.M."/>
            <person name="Hawkins T."/>
            <person name="Plengvidhya V."/>
            <person name="Welker D."/>
            <person name="Hughes J."/>
            <person name="Goh Y."/>
            <person name="Benson A."/>
            <person name="Baldwin K."/>
            <person name="Lee J.-H."/>
            <person name="Diaz-Muniz I."/>
            <person name="Dosti B."/>
            <person name="Smeianov V."/>
            <person name="Wechter W."/>
            <person name="Barabote R."/>
            <person name="Lorca G."/>
            <person name="Altermann E."/>
            <person name="Barrangou R."/>
            <person name="Ganesan B."/>
            <person name="Xie Y."/>
            <person name="Rawsthorne H."/>
            <person name="Tamir D."/>
            <person name="Parker C."/>
            <person name="Breidt F."/>
            <person name="Broadbent J.R."/>
            <person name="Hutkins R."/>
            <person name="O'Sullivan D."/>
            <person name="Steele J."/>
            <person name="Unlu G."/>
            <person name="Saier M.H. Jr."/>
            <person name="Klaenhammer T."/>
            <person name="Richardson P."/>
            <person name="Kozyavkin S."/>
            <person name="Weimer B.C."/>
            <person name="Mills D.A."/>
        </authorList>
    </citation>
    <scope>NUCLEOTIDE SEQUENCE [LARGE SCALE GENOMIC DNA]</scope>
    <source>
        <strain>ATCC 33323 / DSM 20243 / BCRC 14619 / CIP 102991 / JCM 1131 / KCTC 3163 / NCIMB 11718 / NCTC 13722 / AM63</strain>
    </source>
</reference>
<evidence type="ECO:0000255" key="1">
    <source>
        <dbReference type="HAMAP-Rule" id="MF_01309"/>
    </source>
</evidence>
<evidence type="ECO:0000305" key="2"/>
<accession>Q046B9</accession>
<name>RS3_LACGA</name>
<comment type="function">
    <text evidence="1">Binds the lower part of the 30S subunit head. Binds mRNA in the 70S ribosome, positioning it for translation.</text>
</comment>
<comment type="subunit">
    <text evidence="1">Part of the 30S ribosomal subunit. Forms a tight complex with proteins S10 and S14.</text>
</comment>
<comment type="similarity">
    <text evidence="1">Belongs to the universal ribosomal protein uS3 family.</text>
</comment>